<organism>
    <name type="scientific">Xenopus laevis</name>
    <name type="common">African clawed frog</name>
    <dbReference type="NCBI Taxonomy" id="8355"/>
    <lineage>
        <taxon>Eukaryota</taxon>
        <taxon>Metazoa</taxon>
        <taxon>Chordata</taxon>
        <taxon>Craniata</taxon>
        <taxon>Vertebrata</taxon>
        <taxon>Euteleostomi</taxon>
        <taxon>Amphibia</taxon>
        <taxon>Batrachia</taxon>
        <taxon>Anura</taxon>
        <taxon>Pipoidea</taxon>
        <taxon>Pipidae</taxon>
        <taxon>Xenopodinae</taxon>
        <taxon>Xenopus</taxon>
        <taxon>Xenopus</taxon>
    </lineage>
</organism>
<evidence type="ECO:0000250" key="1">
    <source>
        <dbReference type="UniProtKB" id="Q9ULP9"/>
    </source>
</evidence>
<evidence type="ECO:0000250" key="2">
    <source>
        <dbReference type="UniProtKB" id="Q9VIH7"/>
    </source>
</evidence>
<evidence type="ECO:0000255" key="3">
    <source>
        <dbReference type="PROSITE-ProRule" id="PRU01234"/>
    </source>
</evidence>
<evidence type="ECO:0000256" key="4">
    <source>
        <dbReference type="SAM" id="MobiDB-lite"/>
    </source>
</evidence>
<gene>
    <name type="primary">tbc1d24</name>
</gene>
<comment type="function">
    <text evidence="1">May act as a GTPase-activating protein for Rab family protein(s). Involved in neuronal projections development, probably through a negative modulation of ARF6 function. Involved in the regulation of synaptic vesicle trafficking.</text>
</comment>
<comment type="subunit">
    <text evidence="1">Interacts with ARF6.</text>
</comment>
<comment type="subcellular location">
    <subcellularLocation>
        <location evidence="1">Cell membrane</location>
        <topology evidence="1">Peripheral membrane protein</topology>
    </subcellularLocation>
    <subcellularLocation>
        <location evidence="1">Cytoplasm</location>
    </subcellularLocation>
    <subcellularLocation>
        <location evidence="2">Cytoplasmic vesicle membrane</location>
    </subcellularLocation>
    <subcellularLocation>
        <location evidence="1">Presynapse</location>
    </subcellularLocation>
    <text evidence="1 2">Mainly cytoplasmic with partial expression at the plasma membrane (By similarity). Associates with certain types of membrane phosphoinositides, preferentially those phosphorylated at the D5 position of the inositol ring such as phosphatidylinositol 4,5-bisphosphate (PIP2) and phosphatidylinositol 3,4,5-trisphosphate (PIP3) (By similarity).</text>
</comment>
<comment type="domain">
    <text evidence="2">The Rab-GAP TBC domain is essential for phosphatidylinositol binding.</text>
</comment>
<proteinExistence type="evidence at transcript level"/>
<dbReference type="EMBL" id="BC128694">
    <property type="protein sequence ID" value="AAI28695.1"/>
    <property type="molecule type" value="mRNA"/>
</dbReference>
<dbReference type="RefSeq" id="NP_001090574.1">
    <property type="nucleotide sequence ID" value="NM_001097105.1"/>
</dbReference>
<dbReference type="SMR" id="A1A5K6"/>
<dbReference type="DNASU" id="100036814"/>
<dbReference type="GeneID" id="100036814"/>
<dbReference type="KEGG" id="xla:100036814"/>
<dbReference type="AGR" id="Xenbase:XB-GENE-981686"/>
<dbReference type="CTD" id="100036814"/>
<dbReference type="Xenbase" id="XB-GENE-981686">
    <property type="gene designation" value="tbc1d24.L"/>
</dbReference>
<dbReference type="OMA" id="NTSMFMS"/>
<dbReference type="OrthoDB" id="10065050at2759"/>
<dbReference type="Proteomes" id="UP000186698">
    <property type="component" value="Chromosome 9_10L"/>
</dbReference>
<dbReference type="Bgee" id="100036814">
    <property type="expression patterns" value="Expressed in ovary and 19 other cell types or tissues"/>
</dbReference>
<dbReference type="GO" id="GO:0042995">
    <property type="term" value="C:cell projection"/>
    <property type="evidence" value="ECO:0007669"/>
    <property type="project" value="UniProtKB-KW"/>
</dbReference>
<dbReference type="GO" id="GO:0030659">
    <property type="term" value="C:cytoplasmic vesicle membrane"/>
    <property type="evidence" value="ECO:0007669"/>
    <property type="project" value="UniProtKB-SubCell"/>
</dbReference>
<dbReference type="GO" id="GO:0005886">
    <property type="term" value="C:plasma membrane"/>
    <property type="evidence" value="ECO:0007669"/>
    <property type="project" value="UniProtKB-SubCell"/>
</dbReference>
<dbReference type="GO" id="GO:0098793">
    <property type="term" value="C:presynapse"/>
    <property type="evidence" value="ECO:0007669"/>
    <property type="project" value="UniProtKB-SubCell"/>
</dbReference>
<dbReference type="GO" id="GO:0005096">
    <property type="term" value="F:GTPase activator activity"/>
    <property type="evidence" value="ECO:0007669"/>
    <property type="project" value="UniProtKB-KW"/>
</dbReference>
<dbReference type="Gene3D" id="1.10.472.80">
    <property type="entry name" value="Ypt/Rab-GAP domain of gyp1p, domain 3"/>
    <property type="match status" value="1"/>
</dbReference>
<dbReference type="InterPro" id="IPR000195">
    <property type="entry name" value="Rab-GAP-TBC_dom"/>
</dbReference>
<dbReference type="InterPro" id="IPR035969">
    <property type="entry name" value="Rab-GAP_TBC_sf"/>
</dbReference>
<dbReference type="InterPro" id="IPR006571">
    <property type="entry name" value="TLDc_dom"/>
</dbReference>
<dbReference type="PANTHER" id="PTHR23354">
    <property type="entry name" value="NUCLEOLAR PROTEIN 7/ESTROGEN RECEPTOR COACTIVATOR-RELATED"/>
    <property type="match status" value="1"/>
</dbReference>
<dbReference type="PANTHER" id="PTHR23354:SF125">
    <property type="entry name" value="TBC1 DOMAIN FAMILY MEMBER 24"/>
    <property type="match status" value="1"/>
</dbReference>
<dbReference type="Pfam" id="PF00566">
    <property type="entry name" value="RabGAP-TBC"/>
    <property type="match status" value="1"/>
</dbReference>
<dbReference type="Pfam" id="PF07534">
    <property type="entry name" value="TLD"/>
    <property type="match status" value="2"/>
</dbReference>
<dbReference type="SMART" id="SM00164">
    <property type="entry name" value="TBC"/>
    <property type="match status" value="1"/>
</dbReference>
<dbReference type="SMART" id="SM00584">
    <property type="entry name" value="TLDc"/>
    <property type="match status" value="1"/>
</dbReference>
<dbReference type="SUPFAM" id="SSF47923">
    <property type="entry name" value="Ypt/Rab-GAP domain of gyp1p"/>
    <property type="match status" value="2"/>
</dbReference>
<dbReference type="PROSITE" id="PS51886">
    <property type="entry name" value="TLDC"/>
    <property type="match status" value="1"/>
</dbReference>
<keyword id="KW-1003">Cell membrane</keyword>
<keyword id="KW-0966">Cell projection</keyword>
<keyword id="KW-0963">Cytoplasm</keyword>
<keyword id="KW-0968">Cytoplasmic vesicle</keyword>
<keyword id="KW-0343">GTPase activation</keyword>
<keyword id="KW-0472">Membrane</keyword>
<keyword id="KW-1185">Reference proteome</keyword>
<keyword id="KW-0770">Synapse</keyword>
<sequence>MDEAEYGRFVDWDKMEAGGQEQSPKVLSCTDFQELKQMARQGHWAKSHTLRAKVYQKLIKEIPCRTVTPDASVYRDIVGKIVGKRSASSLPLPEFVDDRQIPSYSLNSEGTGAVRKIISCISNQFPDISFCPALPSLVALLLHYSQDEAECFENVSRILACNDPNRRLVDQTFLAFESSCMTFGDLAGKYCQGPHKLMVAVSEDVLELYSDWQRWIFGELPFAYITRVFDVFLVEGYKVLFRVALALLKFFHKVRGGQPMESNNVKRDLQMFVRDLNKCVTPEKLLEKAFAIRLFSRKEIQLLQMANEKALQQKGITVKQKRQNVHLAVHAENFTSEIVSVKEMRDIWSWIPERFALSQPLLLFTNREHGNSLSRFYLHCEGHEPTLLLIKTTNQEVCGAFLSTDWSERKRSGNKLSFFGTGECFVFRLQPEVERYEWVVIKHPELGKVNSSSADKEANSSQSDKDGIDPSSRLSPFLATRHFNLPSKTASMFMAGSIDCIIIGGGDGQALYLDPDLNYGRTSHCNTFNNQPLCSETFQISIIEVWGFKDNMNNDGAHSALH</sequence>
<name>TBC24_XENLA</name>
<protein>
    <recommendedName>
        <fullName>TBC1 domain family member 24</fullName>
    </recommendedName>
</protein>
<reference key="1">
    <citation type="submission" date="2006-12" db="EMBL/GenBank/DDBJ databases">
        <authorList>
            <consortium name="NIH - Xenopus Gene Collection (XGC) project"/>
        </authorList>
    </citation>
    <scope>NUCLEOTIDE SEQUENCE [LARGE SCALE MRNA]</scope>
    <source>
        <tissue>Ovary</tissue>
    </source>
</reference>
<feature type="chain" id="PRO_0000288506" description="TBC1 domain family member 24">
    <location>
        <begin position="1"/>
        <end position="562"/>
    </location>
</feature>
<feature type="domain" description="Rab-GAP TBC">
    <location>
        <begin position="42"/>
        <end position="259"/>
    </location>
</feature>
<feature type="domain" description="TLDc" evidence="3">
    <location>
        <begin position="337"/>
        <end position="549"/>
    </location>
</feature>
<feature type="region of interest" description="Disordered" evidence="4">
    <location>
        <begin position="450"/>
        <end position="471"/>
    </location>
</feature>
<feature type="compositionally biased region" description="Basic and acidic residues" evidence="4">
    <location>
        <begin position="454"/>
        <end position="468"/>
    </location>
</feature>
<feature type="binding site" evidence="2">
    <location>
        <position position="36"/>
    </location>
    <ligand>
        <name>a 1,2-diacyl-sn-glycero-3-phospho-(1D-myo-inositol)</name>
        <dbReference type="ChEBI" id="CHEBI:57880"/>
    </ligand>
</feature>
<feature type="binding site" evidence="2">
    <location>
        <position position="40"/>
    </location>
    <ligand>
        <name>a 1,2-diacyl-sn-glycero-3-phospho-(1D-myo-inositol)</name>
        <dbReference type="ChEBI" id="CHEBI:57880"/>
    </ligand>
</feature>
<feature type="binding site" evidence="2">
    <location>
        <position position="238"/>
    </location>
    <ligand>
        <name>a 1,2-diacyl-sn-glycero-3-phospho-(1D-myo-inositol)</name>
        <dbReference type="ChEBI" id="CHEBI:57880"/>
    </ligand>
</feature>
<feature type="binding site" evidence="2">
    <location>
        <position position="242"/>
    </location>
    <ligand>
        <name>a 1,2-diacyl-sn-glycero-3-phospho-(1D-myo-inositol)</name>
        <dbReference type="ChEBI" id="CHEBI:57880"/>
    </ligand>
</feature>
<feature type="binding site" evidence="2">
    <location>
        <begin position="293"/>
        <end position="297"/>
    </location>
    <ligand>
        <name>a 1,2-diacyl-sn-glycero-3-phospho-(1D-myo-inositol)</name>
        <dbReference type="ChEBI" id="CHEBI:57880"/>
    </ligand>
</feature>
<accession>A1A5K6</accession>